<dbReference type="GO" id="GO:0005576">
    <property type="term" value="C:extracellular region"/>
    <property type="evidence" value="ECO:0007005"/>
    <property type="project" value="UniProtKB"/>
</dbReference>
<dbReference type="GO" id="GO:0090729">
    <property type="term" value="F:toxin activity"/>
    <property type="evidence" value="ECO:0007669"/>
    <property type="project" value="UniProtKB-KW"/>
</dbReference>
<reference evidence="3" key="1">
    <citation type="journal article" date="2004" name="J. Chromatogr. B">
        <title>Proteomics of the venom from the Amazonian scorpion Tityus cambridgei and the role of prolines on mass spectrometry analysis of toxins.</title>
        <authorList>
            <person name="Batista C.V.F."/>
            <person name="del Pozo L."/>
            <person name="Zamudio F.Z."/>
            <person name="Contreras S."/>
            <person name="Becerril B."/>
            <person name="Wanke E."/>
            <person name="Possani L.D."/>
        </authorList>
    </citation>
    <scope>PROTEIN SEQUENCE</scope>
    <scope>SUBCELLULAR LOCATION</scope>
    <scope>TISSUE SPECIFICITY</scope>
    <scope>MASS SPECTROMETRY</scope>
    <source>
        <tissue evidence="1">Venom</tissue>
    </source>
</reference>
<keyword id="KW-0903">Direct protein sequencing</keyword>
<keyword id="KW-0964">Secreted</keyword>
<keyword id="KW-0800">Toxin</keyword>
<organism>
    <name type="scientific">Tityus obscurus</name>
    <name type="common">Amazonian scorpion</name>
    <name type="synonym">Tityus cambridgei</name>
    <dbReference type="NCBI Taxonomy" id="1221240"/>
    <lineage>
        <taxon>Eukaryota</taxon>
        <taxon>Metazoa</taxon>
        <taxon>Ecdysozoa</taxon>
        <taxon>Arthropoda</taxon>
        <taxon>Chelicerata</taxon>
        <taxon>Arachnida</taxon>
        <taxon>Scorpiones</taxon>
        <taxon>Buthida</taxon>
        <taxon>Buthoidea</taxon>
        <taxon>Buthidae</taxon>
        <taxon>Tityus</taxon>
    </lineage>
</organism>
<name>SC29_TITOB</name>
<accession>P84677</accession>
<sequence>FNGAVXIW</sequence>
<evidence type="ECO:0000269" key="1">
    <source>
    </source>
</evidence>
<evidence type="ECO:0000303" key="2">
    <source>
    </source>
</evidence>
<evidence type="ECO:0000305" key="3"/>
<feature type="chain" id="PRO_0000066799" description="Toxin To29">
    <location>
        <begin position="1"/>
        <end position="8" status="greater than"/>
    </location>
</feature>
<feature type="non-terminal residue" evidence="2">
    <location>
        <position position="8"/>
    </location>
</feature>
<protein>
    <recommendedName>
        <fullName>Toxin To29</fullName>
    </recommendedName>
    <alternativeName>
        <fullName>Toxin Tc29</fullName>
    </alternativeName>
</protein>
<comment type="subcellular location">
    <subcellularLocation>
        <location evidence="1">Secreted</location>
    </subcellularLocation>
</comment>
<comment type="tissue specificity">
    <text evidence="1">Expressed by the venom gland.</text>
</comment>
<comment type="mass spectrometry"/>
<proteinExistence type="evidence at protein level"/>